<comment type="function">
    <text evidence="1">Catalyzes the strictly specific dephosphorylation of 2'-deoxyribonucleoside 5'-monophosphates.</text>
</comment>
<comment type="catalytic activity">
    <reaction evidence="1">
        <text>a 2'-deoxyribonucleoside 5'-phosphate + H2O = a 2'-deoxyribonucleoside + phosphate</text>
        <dbReference type="Rhea" id="RHEA:36167"/>
        <dbReference type="ChEBI" id="CHEBI:15377"/>
        <dbReference type="ChEBI" id="CHEBI:18274"/>
        <dbReference type="ChEBI" id="CHEBI:43474"/>
        <dbReference type="ChEBI" id="CHEBI:65317"/>
        <dbReference type="EC" id="3.1.3.89"/>
    </reaction>
</comment>
<comment type="cofactor">
    <cofactor evidence="1">
        <name>a divalent metal cation</name>
        <dbReference type="ChEBI" id="CHEBI:60240"/>
    </cofactor>
</comment>
<comment type="subunit">
    <text evidence="1">Homodimer.</text>
</comment>
<comment type="subcellular location">
    <subcellularLocation>
        <location evidence="1">Cytoplasm</location>
    </subcellularLocation>
</comment>
<comment type="similarity">
    <text evidence="1">Belongs to the 5DNU family.</text>
</comment>
<dbReference type="EC" id="3.1.3.89" evidence="1"/>
<dbReference type="EMBL" id="CU468135">
    <property type="protein sequence ID" value="CAO96247.1"/>
    <property type="molecule type" value="Genomic_DNA"/>
</dbReference>
<dbReference type="RefSeq" id="WP_012440944.1">
    <property type="nucleotide sequence ID" value="NC_010694.1"/>
</dbReference>
<dbReference type="SMR" id="B2VIV0"/>
<dbReference type="STRING" id="465817.ETA_12010"/>
<dbReference type="KEGG" id="eta:ETA_12010"/>
<dbReference type="eggNOG" id="COG1896">
    <property type="taxonomic scope" value="Bacteria"/>
</dbReference>
<dbReference type="HOGENOM" id="CLU_084784_0_0_6"/>
<dbReference type="OrthoDB" id="9812744at2"/>
<dbReference type="Proteomes" id="UP000001726">
    <property type="component" value="Chromosome"/>
</dbReference>
<dbReference type="GO" id="GO:0005737">
    <property type="term" value="C:cytoplasm"/>
    <property type="evidence" value="ECO:0007669"/>
    <property type="project" value="UniProtKB-SubCell"/>
</dbReference>
<dbReference type="GO" id="GO:0002953">
    <property type="term" value="F:5'-deoxynucleotidase activity"/>
    <property type="evidence" value="ECO:0007669"/>
    <property type="project" value="UniProtKB-EC"/>
</dbReference>
<dbReference type="GO" id="GO:0046872">
    <property type="term" value="F:metal ion binding"/>
    <property type="evidence" value="ECO:0007669"/>
    <property type="project" value="UniProtKB-KW"/>
</dbReference>
<dbReference type="GO" id="GO:0000166">
    <property type="term" value="F:nucleotide binding"/>
    <property type="evidence" value="ECO:0007669"/>
    <property type="project" value="UniProtKB-KW"/>
</dbReference>
<dbReference type="FunFam" id="1.10.3210.10:FF:000002">
    <property type="entry name" value="Nucleotidase YfbR"/>
    <property type="match status" value="1"/>
</dbReference>
<dbReference type="Gene3D" id="1.10.3210.10">
    <property type="entry name" value="Hypothetical protein af1432"/>
    <property type="match status" value="1"/>
</dbReference>
<dbReference type="HAMAP" id="MF_01100">
    <property type="entry name" value="5DNU"/>
    <property type="match status" value="1"/>
</dbReference>
<dbReference type="InterPro" id="IPR003607">
    <property type="entry name" value="HD/PDEase_dom"/>
</dbReference>
<dbReference type="InterPro" id="IPR006674">
    <property type="entry name" value="HD_domain"/>
</dbReference>
<dbReference type="InterPro" id="IPR022971">
    <property type="entry name" value="YfbR"/>
</dbReference>
<dbReference type="InterPro" id="IPR039356">
    <property type="entry name" value="YfbR/HDDC2"/>
</dbReference>
<dbReference type="NCBIfam" id="NF003009">
    <property type="entry name" value="PRK03826.1"/>
    <property type="match status" value="1"/>
</dbReference>
<dbReference type="PANTHER" id="PTHR11845">
    <property type="entry name" value="5'-DEOXYNUCLEOTIDASE HDDC2"/>
    <property type="match status" value="1"/>
</dbReference>
<dbReference type="PANTHER" id="PTHR11845:SF13">
    <property type="entry name" value="5'-DEOXYNUCLEOTIDASE HDDC2"/>
    <property type="match status" value="1"/>
</dbReference>
<dbReference type="Pfam" id="PF12917">
    <property type="entry name" value="YfbR-like"/>
    <property type="match status" value="1"/>
</dbReference>
<dbReference type="SMART" id="SM00471">
    <property type="entry name" value="HDc"/>
    <property type="match status" value="1"/>
</dbReference>
<dbReference type="SUPFAM" id="SSF109604">
    <property type="entry name" value="HD-domain/PDEase-like"/>
    <property type="match status" value="1"/>
</dbReference>
<dbReference type="PROSITE" id="PS51831">
    <property type="entry name" value="HD"/>
    <property type="match status" value="1"/>
</dbReference>
<protein>
    <recommendedName>
        <fullName evidence="1">5'-deoxynucleotidase ETA_12010</fullName>
        <ecNumber evidence="1">3.1.3.89</ecNumber>
    </recommendedName>
    <alternativeName>
        <fullName evidence="1">5'-deoxyribonucleotidase</fullName>
    </alternativeName>
    <alternativeName>
        <fullName evidence="1">Nucleoside 5'-monophosphate phosphohydrolase</fullName>
    </alternativeName>
</protein>
<name>5DNU_ERWT9</name>
<gene>
    <name type="ordered locus">ETA_12010</name>
</gene>
<proteinExistence type="inferred from homology"/>
<feature type="chain" id="PRO_1000136969" description="5'-deoxynucleotidase ETA_12010">
    <location>
        <begin position="1"/>
        <end position="198"/>
    </location>
</feature>
<feature type="domain" description="HD" evidence="2">
    <location>
        <begin position="30"/>
        <end position="142"/>
    </location>
</feature>
<feature type="binding site" evidence="1">
    <location>
        <begin position="18"/>
        <end position="19"/>
    </location>
    <ligand>
        <name>substrate</name>
    </ligand>
</feature>
<feature type="binding site" evidence="1">
    <location>
        <position position="33"/>
    </location>
    <ligand>
        <name>a divalent metal cation</name>
        <dbReference type="ChEBI" id="CHEBI:60240"/>
    </ligand>
</feature>
<feature type="binding site" evidence="1">
    <location>
        <position position="33"/>
    </location>
    <ligand>
        <name>substrate</name>
    </ligand>
</feature>
<feature type="binding site" evidence="1">
    <location>
        <position position="68"/>
    </location>
    <ligand>
        <name>a divalent metal cation</name>
        <dbReference type="ChEBI" id="CHEBI:60240"/>
    </ligand>
</feature>
<feature type="binding site" evidence="1">
    <location>
        <position position="69"/>
    </location>
    <ligand>
        <name>a divalent metal cation</name>
        <dbReference type="ChEBI" id="CHEBI:60240"/>
    </ligand>
</feature>
<feature type="binding site" evidence="1">
    <location>
        <position position="69"/>
    </location>
    <ligand>
        <name>substrate</name>
    </ligand>
</feature>
<feature type="binding site" evidence="1">
    <location>
        <begin position="77"/>
        <end position="80"/>
    </location>
    <ligand>
        <name>substrate</name>
    </ligand>
</feature>
<feature type="binding site" evidence="1">
    <location>
        <position position="137"/>
    </location>
    <ligand>
        <name>a divalent metal cation</name>
        <dbReference type="ChEBI" id="CHEBI:60240"/>
    </ligand>
</feature>
<feature type="binding site" evidence="1">
    <location>
        <position position="137"/>
    </location>
    <ligand>
        <name>substrate</name>
    </ligand>
</feature>
<feature type="site" description="Appears to be important in orienting the phosphate for catalysis" evidence="1">
    <location>
        <position position="18"/>
    </location>
</feature>
<keyword id="KW-0963">Cytoplasm</keyword>
<keyword id="KW-0378">Hydrolase</keyword>
<keyword id="KW-0479">Metal-binding</keyword>
<keyword id="KW-0547">Nucleotide-binding</keyword>
<keyword id="KW-1185">Reference proteome</keyword>
<sequence>MIHSHFFAHLSRLKLINRWPLMRNVRTENVSEHSLQVAMVAHALALIKNARFAGNLNPERIALMAVYHDASEVLTGDLPTPVKYYNAQIAHEYKKIEKIAQHKLIEMLPEELRSAYAPLIDEHQHSEAETAIVKQADALCAYLKCLEELSAGNNEFLTAKARLEKTLAQRRSQEMDYFMEVFVPSFSLSLDEISQESL</sequence>
<organism>
    <name type="scientific">Erwinia tasmaniensis (strain DSM 17950 / CFBP 7177 / CIP 109463 / NCPPB 4357 / Et1/99)</name>
    <dbReference type="NCBI Taxonomy" id="465817"/>
    <lineage>
        <taxon>Bacteria</taxon>
        <taxon>Pseudomonadati</taxon>
        <taxon>Pseudomonadota</taxon>
        <taxon>Gammaproteobacteria</taxon>
        <taxon>Enterobacterales</taxon>
        <taxon>Erwiniaceae</taxon>
        <taxon>Erwinia</taxon>
    </lineage>
</organism>
<reference key="1">
    <citation type="journal article" date="2008" name="Environ. Microbiol.">
        <title>The genome of Erwinia tasmaniensis strain Et1/99, a non-pathogenic bacterium in the genus Erwinia.</title>
        <authorList>
            <person name="Kube M."/>
            <person name="Migdoll A.M."/>
            <person name="Mueller I."/>
            <person name="Kuhl H."/>
            <person name="Beck A."/>
            <person name="Reinhardt R."/>
            <person name="Geider K."/>
        </authorList>
    </citation>
    <scope>NUCLEOTIDE SEQUENCE [LARGE SCALE GENOMIC DNA]</scope>
    <source>
        <strain>DSM 17950 / CFBP 7177 / CIP 109463 / NCPPB 4357 / Et1/99</strain>
    </source>
</reference>
<evidence type="ECO:0000255" key="1">
    <source>
        <dbReference type="HAMAP-Rule" id="MF_01100"/>
    </source>
</evidence>
<evidence type="ECO:0000255" key="2">
    <source>
        <dbReference type="PROSITE-ProRule" id="PRU01175"/>
    </source>
</evidence>
<accession>B2VIV0</accession>